<keyword id="KW-0687">Ribonucleoprotein</keyword>
<keyword id="KW-0689">Ribosomal protein</keyword>
<dbReference type="EMBL" id="AE016823">
    <property type="protein sequence ID" value="AAS71011.1"/>
    <property type="molecule type" value="Genomic_DNA"/>
</dbReference>
<dbReference type="RefSeq" id="WP_000290471.1">
    <property type="nucleotide sequence ID" value="NC_005823.1"/>
</dbReference>
<dbReference type="SMR" id="Q72PM5"/>
<dbReference type="GeneID" id="61142320"/>
<dbReference type="KEGG" id="lic:LIC_12444"/>
<dbReference type="HOGENOM" id="CLU_129084_1_3_12"/>
<dbReference type="Proteomes" id="UP000007037">
    <property type="component" value="Chromosome I"/>
</dbReference>
<dbReference type="GO" id="GO:0015934">
    <property type="term" value="C:large ribosomal subunit"/>
    <property type="evidence" value="ECO:0007669"/>
    <property type="project" value="InterPro"/>
</dbReference>
<dbReference type="GO" id="GO:0003735">
    <property type="term" value="F:structural constituent of ribosome"/>
    <property type="evidence" value="ECO:0007669"/>
    <property type="project" value="InterPro"/>
</dbReference>
<dbReference type="GO" id="GO:0006412">
    <property type="term" value="P:translation"/>
    <property type="evidence" value="ECO:0007669"/>
    <property type="project" value="UniProtKB-UniRule"/>
</dbReference>
<dbReference type="HAMAP" id="MF_00340">
    <property type="entry name" value="Ribosomal_bL32"/>
    <property type="match status" value="1"/>
</dbReference>
<dbReference type="InterPro" id="IPR002677">
    <property type="entry name" value="Ribosomal_bL32"/>
</dbReference>
<dbReference type="InterPro" id="IPR044957">
    <property type="entry name" value="Ribosomal_bL32_bact"/>
</dbReference>
<dbReference type="InterPro" id="IPR011332">
    <property type="entry name" value="Ribosomal_zn-bd"/>
</dbReference>
<dbReference type="NCBIfam" id="TIGR01031">
    <property type="entry name" value="rpmF_bact"/>
    <property type="match status" value="1"/>
</dbReference>
<dbReference type="PANTHER" id="PTHR35534">
    <property type="entry name" value="50S RIBOSOMAL PROTEIN L32"/>
    <property type="match status" value="1"/>
</dbReference>
<dbReference type="PANTHER" id="PTHR35534:SF1">
    <property type="entry name" value="LARGE RIBOSOMAL SUBUNIT PROTEIN BL32"/>
    <property type="match status" value="1"/>
</dbReference>
<dbReference type="Pfam" id="PF01783">
    <property type="entry name" value="Ribosomal_L32p"/>
    <property type="match status" value="1"/>
</dbReference>
<dbReference type="SUPFAM" id="SSF57829">
    <property type="entry name" value="Zn-binding ribosomal proteins"/>
    <property type="match status" value="1"/>
</dbReference>
<evidence type="ECO:0000255" key="1">
    <source>
        <dbReference type="HAMAP-Rule" id="MF_00340"/>
    </source>
</evidence>
<evidence type="ECO:0000305" key="2"/>
<accession>Q72PM5</accession>
<proteinExistence type="inferred from homology"/>
<feature type="chain" id="PRO_0000172355" description="Large ribosomal subunit protein bL32">
    <location>
        <begin position="1"/>
        <end position="66"/>
    </location>
</feature>
<name>RL32_LEPIC</name>
<sequence>MAVPKRRKSKSKVRTKRAHHAIGKPNLVPCPNCNSYRLPHRICPTCGFYKTGIVLEPKVKKPKEEN</sequence>
<gene>
    <name evidence="1" type="primary">rpmF</name>
    <name type="ordered locus">LIC_12444</name>
</gene>
<organism>
    <name type="scientific">Leptospira interrogans serogroup Icterohaemorrhagiae serovar copenhageni (strain Fiocruz L1-130)</name>
    <dbReference type="NCBI Taxonomy" id="267671"/>
    <lineage>
        <taxon>Bacteria</taxon>
        <taxon>Pseudomonadati</taxon>
        <taxon>Spirochaetota</taxon>
        <taxon>Spirochaetia</taxon>
        <taxon>Leptospirales</taxon>
        <taxon>Leptospiraceae</taxon>
        <taxon>Leptospira</taxon>
    </lineage>
</organism>
<protein>
    <recommendedName>
        <fullName evidence="1">Large ribosomal subunit protein bL32</fullName>
    </recommendedName>
    <alternativeName>
        <fullName evidence="2">50S ribosomal protein L32</fullName>
    </alternativeName>
</protein>
<reference key="1">
    <citation type="journal article" date="2004" name="J. Bacteriol.">
        <title>Comparative genomics of two Leptospira interrogans serovars reveals novel insights into physiology and pathogenesis.</title>
        <authorList>
            <person name="Nascimento A.L.T.O."/>
            <person name="Ko A.I."/>
            <person name="Martins E.A.L."/>
            <person name="Monteiro-Vitorello C.B."/>
            <person name="Ho P.L."/>
            <person name="Haake D.A."/>
            <person name="Verjovski-Almeida S."/>
            <person name="Hartskeerl R.A."/>
            <person name="Marques M.V."/>
            <person name="Oliveira M.C."/>
            <person name="Menck C.F.M."/>
            <person name="Leite L.C.C."/>
            <person name="Carrer H."/>
            <person name="Coutinho L.L."/>
            <person name="Degrave W.M."/>
            <person name="Dellagostin O.A."/>
            <person name="El-Dorry H."/>
            <person name="Ferro E.S."/>
            <person name="Ferro M.I.T."/>
            <person name="Furlan L.R."/>
            <person name="Gamberini M."/>
            <person name="Giglioti E.A."/>
            <person name="Goes-Neto A."/>
            <person name="Goldman G.H."/>
            <person name="Goldman M.H.S."/>
            <person name="Harakava R."/>
            <person name="Jeronimo S.M.B."/>
            <person name="Junqueira-de-Azevedo I.L.M."/>
            <person name="Kimura E.T."/>
            <person name="Kuramae E.E."/>
            <person name="Lemos E.G.M."/>
            <person name="Lemos M.V.F."/>
            <person name="Marino C.L."/>
            <person name="Nunes L.R."/>
            <person name="de Oliveira R.C."/>
            <person name="Pereira G.G."/>
            <person name="Reis M.S."/>
            <person name="Schriefer A."/>
            <person name="Siqueira W.J."/>
            <person name="Sommer P."/>
            <person name="Tsai S.M."/>
            <person name="Simpson A.J.G."/>
            <person name="Ferro J.A."/>
            <person name="Camargo L.E.A."/>
            <person name="Kitajima J.P."/>
            <person name="Setubal J.C."/>
            <person name="Van Sluys M.A."/>
        </authorList>
    </citation>
    <scope>NUCLEOTIDE SEQUENCE [LARGE SCALE GENOMIC DNA]</scope>
    <source>
        <strain>Fiocruz L1-130</strain>
    </source>
</reference>
<comment type="similarity">
    <text evidence="1">Belongs to the bacterial ribosomal protein bL32 family.</text>
</comment>